<organism>
    <name type="scientific">Cavia porcellus</name>
    <name type="common">Guinea pig</name>
    <dbReference type="NCBI Taxonomy" id="10141"/>
    <lineage>
        <taxon>Eukaryota</taxon>
        <taxon>Metazoa</taxon>
        <taxon>Chordata</taxon>
        <taxon>Craniata</taxon>
        <taxon>Vertebrata</taxon>
        <taxon>Euteleostomi</taxon>
        <taxon>Mammalia</taxon>
        <taxon>Eutheria</taxon>
        <taxon>Euarchontoglires</taxon>
        <taxon>Glires</taxon>
        <taxon>Rodentia</taxon>
        <taxon>Hystricomorpha</taxon>
        <taxon>Caviidae</taxon>
        <taxon>Cavia</taxon>
    </lineage>
</organism>
<dbReference type="EMBL" id="U04955">
    <property type="protein sequence ID" value="AAA73904.1"/>
    <property type="molecule type" value="mRNA"/>
</dbReference>
<dbReference type="PIR" id="I48097">
    <property type="entry name" value="I48097"/>
</dbReference>
<dbReference type="RefSeq" id="NP_001166490.1">
    <property type="nucleotide sequence ID" value="NM_001173019.1"/>
</dbReference>
<dbReference type="RefSeq" id="XP_013011147.1">
    <property type="nucleotide sequence ID" value="XM_013155693.1"/>
</dbReference>
<dbReference type="SMR" id="P48766"/>
<dbReference type="FunCoup" id="P48766">
    <property type="interactions" value="1207"/>
</dbReference>
<dbReference type="STRING" id="10141.ENSCPOP00000002023"/>
<dbReference type="ChEMBL" id="CHEMBL3494"/>
<dbReference type="GlyCosmos" id="P48766">
    <property type="glycosylation" value="2 sites, No reported glycans"/>
</dbReference>
<dbReference type="Ensembl" id="ENSCPOT00000002262.3">
    <property type="protein sequence ID" value="ENSCPOP00000002023.3"/>
    <property type="gene ID" value="ENSCPOG00000002233.4"/>
</dbReference>
<dbReference type="GeneID" id="100135620"/>
<dbReference type="KEGG" id="cpoc:100135620"/>
<dbReference type="CTD" id="6546"/>
<dbReference type="VEuPathDB" id="HostDB:ENSCPOG00000002233"/>
<dbReference type="eggNOG" id="KOG1306">
    <property type="taxonomic scope" value="Eukaryota"/>
</dbReference>
<dbReference type="GeneTree" id="ENSGT00940000155129"/>
<dbReference type="HOGENOM" id="CLU_012872_1_0_1"/>
<dbReference type="InParanoid" id="P48766"/>
<dbReference type="OMA" id="TFSMGCH"/>
<dbReference type="OrthoDB" id="418484at2759"/>
<dbReference type="PRO" id="PR:P48766"/>
<dbReference type="Proteomes" id="UP000005447">
    <property type="component" value="Unassembled WGS sequence"/>
</dbReference>
<dbReference type="Bgee" id="ENSCPOG00000002233">
    <property type="expression patterns" value="Expressed in heart left ventricle and 12 other cell types or tissues"/>
</dbReference>
<dbReference type="GO" id="GO:0030424">
    <property type="term" value="C:axon"/>
    <property type="evidence" value="ECO:0007669"/>
    <property type="project" value="TreeGrafter"/>
</dbReference>
<dbReference type="GO" id="GO:0014704">
    <property type="term" value="C:intercalated disc"/>
    <property type="evidence" value="ECO:0000314"/>
    <property type="project" value="BHF-UCL"/>
</dbReference>
<dbReference type="GO" id="GO:0005654">
    <property type="term" value="C:nucleoplasm"/>
    <property type="evidence" value="ECO:0007669"/>
    <property type="project" value="Ensembl"/>
</dbReference>
<dbReference type="GO" id="GO:0005886">
    <property type="term" value="C:plasma membrane"/>
    <property type="evidence" value="ECO:0000250"/>
    <property type="project" value="UniProtKB"/>
</dbReference>
<dbReference type="GO" id="GO:0098794">
    <property type="term" value="C:postsynapse"/>
    <property type="evidence" value="ECO:0007669"/>
    <property type="project" value="TreeGrafter"/>
</dbReference>
<dbReference type="GO" id="GO:0042383">
    <property type="term" value="C:sarcolemma"/>
    <property type="evidence" value="ECO:0000314"/>
    <property type="project" value="BHF-UCL"/>
</dbReference>
<dbReference type="GO" id="GO:0030315">
    <property type="term" value="C:T-tubule"/>
    <property type="evidence" value="ECO:0000314"/>
    <property type="project" value="BHF-UCL"/>
</dbReference>
<dbReference type="GO" id="GO:0030018">
    <property type="term" value="C:Z disc"/>
    <property type="evidence" value="ECO:0000314"/>
    <property type="project" value="BHF-UCL"/>
</dbReference>
<dbReference type="GO" id="GO:0030506">
    <property type="term" value="F:ankyrin binding"/>
    <property type="evidence" value="ECO:0007669"/>
    <property type="project" value="Ensembl"/>
</dbReference>
<dbReference type="GO" id="GO:0005509">
    <property type="term" value="F:calcium ion binding"/>
    <property type="evidence" value="ECO:0000250"/>
    <property type="project" value="UniProtKB"/>
</dbReference>
<dbReference type="GO" id="GO:0005432">
    <property type="term" value="F:calcium:sodium antiporter activity"/>
    <property type="evidence" value="ECO:0000250"/>
    <property type="project" value="UniProtKB"/>
</dbReference>
<dbReference type="GO" id="GO:0005516">
    <property type="term" value="F:calmodulin binding"/>
    <property type="evidence" value="ECO:0007669"/>
    <property type="project" value="UniProtKB-KW"/>
</dbReference>
<dbReference type="GO" id="GO:0055074">
    <property type="term" value="P:calcium ion homeostasis"/>
    <property type="evidence" value="ECO:0000314"/>
    <property type="project" value="BHF-UCL"/>
</dbReference>
<dbReference type="GO" id="GO:0098703">
    <property type="term" value="P:calcium ion import across plasma membrane"/>
    <property type="evidence" value="ECO:0007669"/>
    <property type="project" value="TreeGrafter"/>
</dbReference>
<dbReference type="GO" id="GO:0070588">
    <property type="term" value="P:calcium ion transmembrane transport"/>
    <property type="evidence" value="ECO:0000250"/>
    <property type="project" value="UniProtKB"/>
</dbReference>
<dbReference type="GO" id="GO:0006816">
    <property type="term" value="P:calcium ion transport"/>
    <property type="evidence" value="ECO:0000314"/>
    <property type="project" value="BHF-UCL"/>
</dbReference>
<dbReference type="GO" id="GO:0007154">
    <property type="term" value="P:cell communication"/>
    <property type="evidence" value="ECO:0007669"/>
    <property type="project" value="InterPro"/>
</dbReference>
<dbReference type="GO" id="GO:0006883">
    <property type="term" value="P:intracellular sodium ion homeostasis"/>
    <property type="evidence" value="ECO:0007669"/>
    <property type="project" value="Ensembl"/>
</dbReference>
<dbReference type="GO" id="GO:0030501">
    <property type="term" value="P:positive regulation of bone mineralization"/>
    <property type="evidence" value="ECO:0007669"/>
    <property type="project" value="Ensembl"/>
</dbReference>
<dbReference type="GO" id="GO:0098735">
    <property type="term" value="P:positive regulation of the force of heart contraction"/>
    <property type="evidence" value="ECO:0007669"/>
    <property type="project" value="Ensembl"/>
</dbReference>
<dbReference type="GO" id="GO:0002026">
    <property type="term" value="P:regulation of the force of heart contraction"/>
    <property type="evidence" value="ECO:0000305"/>
    <property type="project" value="BHF-UCL"/>
</dbReference>
<dbReference type="GO" id="GO:0055119">
    <property type="term" value="P:relaxation of cardiac muscle"/>
    <property type="evidence" value="ECO:0000305"/>
    <property type="project" value="BHF-UCL"/>
</dbReference>
<dbReference type="GO" id="GO:0035994">
    <property type="term" value="P:response to muscle stretch"/>
    <property type="evidence" value="ECO:0007669"/>
    <property type="project" value="Ensembl"/>
</dbReference>
<dbReference type="GO" id="GO:0098719">
    <property type="term" value="P:sodium ion import across plasma membrane"/>
    <property type="evidence" value="ECO:0007669"/>
    <property type="project" value="Ensembl"/>
</dbReference>
<dbReference type="GO" id="GO:0035725">
    <property type="term" value="P:sodium ion transmembrane transport"/>
    <property type="evidence" value="ECO:0000250"/>
    <property type="project" value="UniProtKB"/>
</dbReference>
<dbReference type="FunFam" id="1.20.1420.30:FF:000001">
    <property type="entry name" value="sodium/calcium exchanger 1 isoform X1"/>
    <property type="match status" value="1"/>
</dbReference>
<dbReference type="FunFam" id="1.20.1420.30:FF:000003">
    <property type="entry name" value="sodium/calcium exchanger 1 isoform X1"/>
    <property type="match status" value="1"/>
</dbReference>
<dbReference type="FunFam" id="2.60.40.2030:FF:000001">
    <property type="entry name" value="sodium/calcium exchanger 1 isoform X1"/>
    <property type="match status" value="1"/>
</dbReference>
<dbReference type="Gene3D" id="2.60.40.2030">
    <property type="match status" value="2"/>
</dbReference>
<dbReference type="Gene3D" id="1.20.1420.30">
    <property type="entry name" value="NCX, central ion-binding region"/>
    <property type="match status" value="2"/>
</dbReference>
<dbReference type="InterPro" id="IPR051171">
    <property type="entry name" value="CaCA"/>
</dbReference>
<dbReference type="InterPro" id="IPR038081">
    <property type="entry name" value="CalX-like_sf"/>
</dbReference>
<dbReference type="InterPro" id="IPR003644">
    <property type="entry name" value="Calx_beta"/>
</dbReference>
<dbReference type="InterPro" id="IPR001623">
    <property type="entry name" value="DnaJ_domain"/>
</dbReference>
<dbReference type="InterPro" id="IPR004836">
    <property type="entry name" value="Na_Ca_Ex"/>
</dbReference>
<dbReference type="InterPro" id="IPR032452">
    <property type="entry name" value="Na_Ca_Ex_C-exten"/>
</dbReference>
<dbReference type="InterPro" id="IPR002987">
    <property type="entry name" value="NaCa_exhngr1"/>
</dbReference>
<dbReference type="InterPro" id="IPR004837">
    <property type="entry name" value="NaCa_Exmemb"/>
</dbReference>
<dbReference type="InterPro" id="IPR044880">
    <property type="entry name" value="NCX_ion-bd_dom_sf"/>
</dbReference>
<dbReference type="NCBIfam" id="TIGR00845">
    <property type="entry name" value="caca"/>
    <property type="match status" value="1"/>
</dbReference>
<dbReference type="PANTHER" id="PTHR11878">
    <property type="entry name" value="SODIUM/CALCIUM EXCHANGER"/>
    <property type="match status" value="1"/>
</dbReference>
<dbReference type="PANTHER" id="PTHR11878:SF6">
    <property type="entry name" value="SODIUM_CALCIUM EXCHANGER 1"/>
    <property type="match status" value="1"/>
</dbReference>
<dbReference type="Pfam" id="PF03160">
    <property type="entry name" value="Calx-beta"/>
    <property type="match status" value="1"/>
</dbReference>
<dbReference type="Pfam" id="PF01699">
    <property type="entry name" value="Na_Ca_ex"/>
    <property type="match status" value="2"/>
</dbReference>
<dbReference type="Pfam" id="PF16494">
    <property type="entry name" value="Na_Ca_ex_C"/>
    <property type="match status" value="1"/>
</dbReference>
<dbReference type="PRINTS" id="PR01259">
    <property type="entry name" value="NACAEXCHNGR"/>
</dbReference>
<dbReference type="PRINTS" id="PR01260">
    <property type="entry name" value="NACAEXCHNGR1"/>
</dbReference>
<dbReference type="SMART" id="SM00237">
    <property type="entry name" value="Calx_beta"/>
    <property type="match status" value="2"/>
</dbReference>
<dbReference type="SUPFAM" id="SSF141072">
    <property type="entry name" value="CalX-like"/>
    <property type="match status" value="2"/>
</dbReference>
<sequence length="970" mass="108072">MLRLSLSPTYSLGFHLLAMMTLLISHVDHITAETEMVEEGNETGECTGSYYCKKGVILPIWEPQDPSFGDKIARATVYFVAMVYMFLGVSIIADRFMSSIEVITSQEKEITIKKPNGETTKTTVRIWNETVSNLTLMALGSSAPEILLSVIEVCGHNFTAGDLGPSTIVGSAAFNMFIIIALCVYVVPDGETRKIKHLRVFFVTAAWSIFAYTWLYIILSVISPGVVEVWEGLLTFFFFPICVVFAWVADRRLLFYKYVYKRYRAGKQRGMIIEHEGDRPSSKTEIEMDGKVVNSHVENFLDGALVLEVDERDQDDEEARREMARILKELKQKHPEKEIEQLIELANYQVLSQQQKSRAFYRIQATRLMTGAGNILKRHAADQARKAVSMHEVNTEVAENDPVSKIFFEQGTYQCLENCGTVALTIIRRGGDLTNTVFVDFRTEDGTANAGSDYEFTEGTVVFKPGETQKEIRVGIIDDDIFEEDENFLVHLSNVKVSSEASEDGILEANHISTLACLGSPSTATVTIFDDDHAGIFTFEEPVTHVSESIGIMEVKVLRTSGARGNVIVPYKTIEGTARGGGEDFEDTCGELEFQNDEIVKTISVKVIDDEEYEKNKTFFLEIGEPRLVEMSEKKALLLNELGGFTITGKHLYGQPVLRKVHARDHPIPSTVITIADEYDDKQPLTSKEEEERRIAELGRPILGEHTKLEVIIEESYEFKSTVDKLIKKTNLALVVGTNSWREQFIEAITVSAGEDDDDDECGEEKLPSCFDYVMHFLTVFWKVLFAFVPPTEYWNGWACFIVSILMIGLLTAFIGDLASHFGCTIGLKDSVTAVVFVALGTSVPDTFASKVAATQDQYADASIGNVTGSNAVNVFLGIGVAWSIAAIYHAANGEQFKVSPGTLAFSVTLFTIFAFINVGVLLYRRRPEIGGELGGPRTAKLLTSCLFVLLWLLYIFFSSLEAYCHIKGF</sequence>
<evidence type="ECO:0000250" key="1">
    <source>
        <dbReference type="UniProtKB" id="P23685"/>
    </source>
</evidence>
<evidence type="ECO:0000250" key="2">
    <source>
        <dbReference type="UniProtKB" id="P32418"/>
    </source>
</evidence>
<evidence type="ECO:0000250" key="3">
    <source>
        <dbReference type="UniProtKB" id="P70414"/>
    </source>
</evidence>
<evidence type="ECO:0000250" key="4">
    <source>
        <dbReference type="UniProtKB" id="Q01728"/>
    </source>
</evidence>
<evidence type="ECO:0000255" key="5"/>
<evidence type="ECO:0000269" key="6">
    <source>
    </source>
</evidence>
<evidence type="ECO:0000305" key="7"/>
<accession>P48766</accession>
<proteinExistence type="evidence at transcript level"/>
<comment type="function">
    <text evidence="3 6">Mediates the exchange of one Ca(2+) ion against three to four Na(+) ions across the cell membrane, and thereby contributes to the regulation of cytoplasmic Ca(2+) levels and Ca(2+)-dependent cellular processes (PubMed:7986817). Contributes to Ca(2+) transport during excitation-contraction coupling in muscle. In a first phase, voltage-gated channels mediate the rapid increase of cytoplasmic Ca(2+) levels due to release of Ca(2+) stores from the endoplasmic reticulum. SLC8A1 mediates the export of Ca(2+) from the cell during the next phase, so that cytoplasmic Ca(2+) levels rapidly return to baseline. Required for normal embryonic heart development and the onset of heart contractions (By similarity).</text>
</comment>
<comment type="catalytic activity">
    <reaction evidence="2">
        <text>Ca(2+)(in) + 3 Na(+)(out) = Ca(2+)(out) + 3 Na(+)(in)</text>
        <dbReference type="Rhea" id="RHEA:69955"/>
        <dbReference type="ChEBI" id="CHEBI:29101"/>
        <dbReference type="ChEBI" id="CHEBI:29108"/>
    </reaction>
</comment>
<comment type="activity regulation">
    <text evidence="4">Activated by micromolar levels of Ca(2+).</text>
</comment>
<comment type="subcellular location">
    <subcellularLocation>
        <location evidence="6">Cell membrane</location>
        <topology evidence="7">Multi-pass membrane protein</topology>
    </subcellularLocation>
</comment>
<comment type="domain">
    <text evidence="1">The cytoplasmic Calx-beta domains bind the regulatory Ca(2+). The first Calx-beta domain can bind up to four Ca(2+) ions. The second domain can bind another two Ca(2+) ions that are essential for calcium-regulated ion exchange.</text>
</comment>
<comment type="similarity">
    <text evidence="7">Belongs to the Ca(2+):cation antiporter (CaCA) (TC 2.A.19) family. SLC8 subfamily.</text>
</comment>
<protein>
    <recommendedName>
        <fullName>Sodium/calcium exchanger 1</fullName>
    </recommendedName>
    <alternativeName>
        <fullName>Na(+)/Ca(2+)-exchange protein 1</fullName>
    </alternativeName>
    <alternativeName>
        <fullName>Solute carrier family 8 member 1</fullName>
    </alternativeName>
</protein>
<feature type="signal peptide" evidence="5">
    <location>
        <begin position="1"/>
        <end position="32"/>
    </location>
</feature>
<feature type="chain" id="PRO_0000019377" description="Sodium/calcium exchanger 1">
    <location>
        <begin position="33"/>
        <end position="970"/>
    </location>
</feature>
<feature type="topological domain" description="Extracellular" evidence="5">
    <location>
        <begin position="33"/>
        <end position="71"/>
    </location>
</feature>
<feature type="transmembrane region" description="Helical" evidence="5">
    <location>
        <begin position="72"/>
        <end position="92"/>
    </location>
</feature>
<feature type="topological domain" description="Cytoplasmic" evidence="5">
    <location>
        <begin position="93"/>
        <end position="133"/>
    </location>
</feature>
<feature type="transmembrane region" description="Helical" evidence="5">
    <location>
        <begin position="134"/>
        <end position="154"/>
    </location>
</feature>
<feature type="topological domain" description="Extracellular" evidence="5">
    <location>
        <begin position="155"/>
        <end position="167"/>
    </location>
</feature>
<feature type="transmembrane region" description="Helical" evidence="5">
    <location>
        <begin position="168"/>
        <end position="188"/>
    </location>
</feature>
<feature type="topological domain" description="Cytoplasmic" evidence="5">
    <location>
        <begin position="189"/>
        <end position="201"/>
    </location>
</feature>
<feature type="transmembrane region" description="Helical" evidence="5">
    <location>
        <begin position="202"/>
        <end position="222"/>
    </location>
</feature>
<feature type="topological domain" description="Extracellular" evidence="5">
    <location>
        <begin position="223"/>
        <end position="228"/>
    </location>
</feature>
<feature type="transmembrane region" description="Helical" evidence="5">
    <location>
        <begin position="229"/>
        <end position="249"/>
    </location>
</feature>
<feature type="topological domain" description="Cytoplasmic" evidence="5">
    <location>
        <begin position="250"/>
        <end position="797"/>
    </location>
</feature>
<feature type="transmembrane region" description="Helical" evidence="5">
    <location>
        <begin position="798"/>
        <end position="818"/>
    </location>
</feature>
<feature type="topological domain" description="Extracellular" evidence="5">
    <location>
        <begin position="819"/>
        <end position="821"/>
    </location>
</feature>
<feature type="transmembrane region" description="Helical" evidence="5">
    <location>
        <begin position="822"/>
        <end position="842"/>
    </location>
</feature>
<feature type="topological domain" description="Cytoplasmic" evidence="5">
    <location>
        <begin position="843"/>
        <end position="871"/>
    </location>
</feature>
<feature type="transmembrane region" description="Helical" evidence="5">
    <location>
        <begin position="872"/>
        <end position="892"/>
    </location>
</feature>
<feature type="topological domain" description="Extracellular" evidence="5">
    <location>
        <begin position="893"/>
        <end position="903"/>
    </location>
</feature>
<feature type="transmembrane region" description="Helical" evidence="5">
    <location>
        <begin position="904"/>
        <end position="924"/>
    </location>
</feature>
<feature type="topological domain" description="Cytoplasmic" evidence="5">
    <location>
        <begin position="925"/>
        <end position="941"/>
    </location>
</feature>
<feature type="transmembrane region" description="Helical" evidence="5">
    <location>
        <begin position="942"/>
        <end position="962"/>
    </location>
</feature>
<feature type="topological domain" description="Extracellular" evidence="5">
    <location>
        <begin position="963"/>
        <end position="970"/>
    </location>
</feature>
<feature type="repeat" description="Alpha-1">
    <location>
        <begin position="138"/>
        <end position="178"/>
    </location>
</feature>
<feature type="domain" description="Calx-beta 1">
    <location>
        <begin position="393"/>
        <end position="493"/>
    </location>
</feature>
<feature type="domain" description="Calx-beta 2">
    <location>
        <begin position="524"/>
        <end position="624"/>
    </location>
</feature>
<feature type="repeat" description="Alpha-2">
    <location>
        <begin position="839"/>
        <end position="875"/>
    </location>
</feature>
<feature type="region of interest" description="Putative calmodulin-binding region" evidence="1">
    <location>
        <begin position="251"/>
        <end position="270"/>
    </location>
</feature>
<feature type="binding site" evidence="1">
    <location>
        <position position="417"/>
    </location>
    <ligand>
        <name>Ca(2+)</name>
        <dbReference type="ChEBI" id="CHEBI:29108"/>
        <label>1</label>
    </ligand>
</feature>
<feature type="binding site" evidence="1">
    <location>
        <position position="417"/>
    </location>
    <ligand>
        <name>Ca(2+)</name>
        <dbReference type="ChEBI" id="CHEBI:29108"/>
        <label>2</label>
    </ligand>
</feature>
<feature type="binding site" evidence="1">
    <location>
        <position position="417"/>
    </location>
    <ligand>
        <name>Ca(2+)</name>
        <dbReference type="ChEBI" id="CHEBI:29108"/>
        <label>3</label>
    </ligand>
</feature>
<feature type="binding site" evidence="1">
    <location>
        <position position="453"/>
    </location>
    <ligand>
        <name>Ca(2+)</name>
        <dbReference type="ChEBI" id="CHEBI:29108"/>
        <label>1</label>
    </ligand>
</feature>
<feature type="binding site" evidence="1">
    <location>
        <position position="453"/>
    </location>
    <ligand>
        <name>Ca(2+)</name>
        <dbReference type="ChEBI" id="CHEBI:29108"/>
        <label>4</label>
    </ligand>
</feature>
<feature type="binding site" evidence="1">
    <location>
        <position position="478"/>
    </location>
    <ligand>
        <name>Ca(2+)</name>
        <dbReference type="ChEBI" id="CHEBI:29108"/>
        <label>2</label>
    </ligand>
</feature>
<feature type="binding site" evidence="1">
    <location>
        <position position="479"/>
    </location>
    <ligand>
        <name>Ca(2+)</name>
        <dbReference type="ChEBI" id="CHEBI:29108"/>
        <label>1</label>
    </ligand>
</feature>
<feature type="binding site" evidence="1">
    <location>
        <position position="479"/>
    </location>
    <ligand>
        <name>Ca(2+)</name>
        <dbReference type="ChEBI" id="CHEBI:29108"/>
        <label>2</label>
    </ligand>
</feature>
<feature type="binding site" evidence="1">
    <location>
        <position position="479"/>
    </location>
    <ligand>
        <name>Ca(2+)</name>
        <dbReference type="ChEBI" id="CHEBI:29108"/>
        <label>3</label>
    </ligand>
</feature>
<feature type="binding site" evidence="1">
    <location>
        <position position="479"/>
    </location>
    <ligand>
        <name>Ca(2+)</name>
        <dbReference type="ChEBI" id="CHEBI:29108"/>
        <label>4</label>
    </ligand>
</feature>
<feature type="binding site" evidence="1">
    <location>
        <position position="481"/>
    </location>
    <ligand>
        <name>Ca(2+)</name>
        <dbReference type="ChEBI" id="CHEBI:29108"/>
        <label>3</label>
    </ligand>
</feature>
<feature type="binding site" evidence="1">
    <location>
        <position position="483"/>
    </location>
    <ligand>
        <name>Ca(2+)</name>
        <dbReference type="ChEBI" id="CHEBI:29108"/>
        <label>1</label>
    </ligand>
</feature>
<feature type="binding site" evidence="1">
    <location>
        <position position="483"/>
    </location>
    <ligand>
        <name>Ca(2+)</name>
        <dbReference type="ChEBI" id="CHEBI:29108"/>
        <label>3</label>
    </ligand>
</feature>
<feature type="binding site" evidence="1">
    <location>
        <position position="483"/>
    </location>
    <ligand>
        <name>Ca(2+)</name>
        <dbReference type="ChEBI" id="CHEBI:29108"/>
        <label>4</label>
    </ligand>
</feature>
<feature type="binding site" evidence="1">
    <location>
        <position position="486"/>
    </location>
    <ligand>
        <name>Ca(2+)</name>
        <dbReference type="ChEBI" id="CHEBI:29108"/>
        <label>4</label>
    </ligand>
</feature>
<feature type="binding site" evidence="1">
    <location>
        <position position="530"/>
    </location>
    <ligand>
        <name>Ca(2+)</name>
        <dbReference type="ChEBI" id="CHEBI:29108"/>
        <label>3</label>
    </ligand>
</feature>
<feature type="binding site" evidence="1">
    <location>
        <position position="531"/>
    </location>
    <ligand>
        <name>Ca(2+)</name>
        <dbReference type="ChEBI" id="CHEBI:29108"/>
        <label>2</label>
    </ligand>
</feature>
<feature type="binding site" evidence="1">
    <location>
        <position position="532"/>
    </location>
    <ligand>
        <name>Ca(2+)</name>
        <dbReference type="ChEBI" id="CHEBI:29108"/>
        <label>2</label>
    </ligand>
</feature>
<feature type="binding site" evidence="1">
    <location>
        <position position="532"/>
    </location>
    <ligand>
        <name>Ca(2+)</name>
        <dbReference type="ChEBI" id="CHEBI:29108"/>
        <label>3</label>
    </ligand>
</feature>
<feature type="binding site" evidence="1">
    <location>
        <position position="548"/>
    </location>
    <ligand>
        <name>Ca(2+)</name>
        <dbReference type="ChEBI" id="CHEBI:29108"/>
        <label>5</label>
    </ligand>
</feature>
<feature type="binding site" evidence="1">
    <location>
        <position position="584"/>
    </location>
    <ligand>
        <name>Ca(2+)</name>
        <dbReference type="ChEBI" id="CHEBI:29108"/>
        <label>6</label>
    </ligand>
</feature>
<feature type="binding site" evidence="1">
    <location>
        <position position="610"/>
    </location>
    <ligand>
        <name>Ca(2+)</name>
        <dbReference type="ChEBI" id="CHEBI:29108"/>
        <label>5</label>
    </ligand>
</feature>
<feature type="binding site" evidence="1">
    <location>
        <position position="610"/>
    </location>
    <ligand>
        <name>Ca(2+)</name>
        <dbReference type="ChEBI" id="CHEBI:29108"/>
        <label>6</label>
    </ligand>
</feature>
<feature type="binding site" evidence="1">
    <location>
        <position position="611"/>
    </location>
    <ligand>
        <name>Ca(2+)</name>
        <dbReference type="ChEBI" id="CHEBI:29108"/>
        <label>6</label>
    </ligand>
</feature>
<feature type="binding site" evidence="1">
    <location>
        <position position="612"/>
    </location>
    <ligand>
        <name>Ca(2+)</name>
        <dbReference type="ChEBI" id="CHEBI:29108"/>
        <label>5</label>
    </ligand>
</feature>
<feature type="binding site" evidence="1">
    <location>
        <position position="612"/>
    </location>
    <ligand>
        <name>Ca(2+)</name>
        <dbReference type="ChEBI" id="CHEBI:29108"/>
        <label>6</label>
    </ligand>
</feature>
<feature type="binding site" evidence="1">
    <location>
        <position position="715"/>
    </location>
    <ligand>
        <name>Ca(2+)</name>
        <dbReference type="ChEBI" id="CHEBI:29108"/>
        <label>5</label>
    </ligand>
</feature>
<feature type="modified residue" description="Phosphoserine" evidence="3">
    <location>
        <position position="282"/>
    </location>
</feature>
<feature type="modified residue" description="Phosphoserine" evidence="3 5">
    <location>
        <position position="389"/>
    </location>
</feature>
<feature type="glycosylation site" description="N-linked (GlcNAc...) asparagine" evidence="5">
    <location>
        <position position="41"/>
    </location>
</feature>
<feature type="glycosylation site" description="N-linked (GlcNAc...) asparagine" evidence="5">
    <location>
        <position position="157"/>
    </location>
</feature>
<reference key="1">
    <citation type="journal article" date="1994" name="Biochim. Biophys. Acta">
        <title>Molecular cloning and functional expression of the guinea pig cardiac Na(+)-Ca2+ exchanger.</title>
        <authorList>
            <person name="Tsuruya Y."/>
            <person name="Bersohn M.M."/>
            <person name="Li Z."/>
            <person name="Nicoll D.A."/>
            <person name="Philipson K.D."/>
        </authorList>
    </citation>
    <scope>NUCLEOTIDE SEQUENCE [MRNA]</scope>
    <scope>FUNCTION</scope>
    <scope>SUBCELLULAR LOCATION</scope>
    <source>
        <tissue>Heart</tissue>
    </source>
</reference>
<reference key="2">
    <citation type="journal article" date="2013" name="Mol. Aspects Med.">
        <title>The SLC8 gene family of sodium-calcium exchangers (NCX) - structure, function, and regulation in health and disease.</title>
        <authorList>
            <person name="Khananshvili D."/>
        </authorList>
    </citation>
    <scope>REVIEW</scope>
</reference>
<keyword id="KW-0050">Antiport</keyword>
<keyword id="KW-0106">Calcium</keyword>
<keyword id="KW-0109">Calcium transport</keyword>
<keyword id="KW-0112">Calmodulin-binding</keyword>
<keyword id="KW-1003">Cell membrane</keyword>
<keyword id="KW-0325">Glycoprotein</keyword>
<keyword id="KW-0406">Ion transport</keyword>
<keyword id="KW-0472">Membrane</keyword>
<keyword id="KW-0479">Metal-binding</keyword>
<keyword id="KW-0597">Phosphoprotein</keyword>
<keyword id="KW-1185">Reference proteome</keyword>
<keyword id="KW-0677">Repeat</keyword>
<keyword id="KW-0732">Signal</keyword>
<keyword id="KW-0915">Sodium</keyword>
<keyword id="KW-0739">Sodium transport</keyword>
<keyword id="KW-0812">Transmembrane</keyword>
<keyword id="KW-1133">Transmembrane helix</keyword>
<keyword id="KW-0813">Transport</keyword>
<name>NAC1_CAVPO</name>
<gene>
    <name type="primary">SLC8A1</name>
</gene>